<keyword id="KW-0488">Methylation</keyword>
<keyword id="KW-0687">Ribonucleoprotein</keyword>
<keyword id="KW-0689">Ribosomal protein</keyword>
<keyword id="KW-0694">RNA-binding</keyword>
<keyword id="KW-0699">rRNA-binding</keyword>
<gene>
    <name evidence="1" type="primary">rplK</name>
    <name type="ordered locus">BPP0010</name>
</gene>
<feature type="chain" id="PRO_0000104254" description="Large ribosomal subunit protein uL11">
    <location>
        <begin position="1"/>
        <end position="143"/>
    </location>
</feature>
<sequence>MAKKIVGFIKLQVPAGKANPSPPIGPALGQRGLNIMEFCKAFNAKTQGMEPGLPIPVVITAFADKSFTFIMKTPPATVLIKKASGVQKGSAKPHTDKVGTLTRAQAEEIAKTKQPDLTAADLDAAVRTIAGSARSMGITVEGV</sequence>
<dbReference type="EMBL" id="BX640423">
    <property type="protein sequence ID" value="CAE39751.1"/>
    <property type="molecule type" value="Genomic_DNA"/>
</dbReference>
<dbReference type="RefSeq" id="WP_003806886.1">
    <property type="nucleotide sequence ID" value="NC_002928.3"/>
</dbReference>
<dbReference type="SMR" id="Q7W2H3"/>
<dbReference type="GeneID" id="93206239"/>
<dbReference type="KEGG" id="bpa:BPP0010"/>
<dbReference type="HOGENOM" id="CLU_074237_2_0_4"/>
<dbReference type="Proteomes" id="UP000001421">
    <property type="component" value="Chromosome"/>
</dbReference>
<dbReference type="GO" id="GO:0022625">
    <property type="term" value="C:cytosolic large ribosomal subunit"/>
    <property type="evidence" value="ECO:0007669"/>
    <property type="project" value="TreeGrafter"/>
</dbReference>
<dbReference type="GO" id="GO:0070180">
    <property type="term" value="F:large ribosomal subunit rRNA binding"/>
    <property type="evidence" value="ECO:0007669"/>
    <property type="project" value="UniProtKB-UniRule"/>
</dbReference>
<dbReference type="GO" id="GO:0003735">
    <property type="term" value="F:structural constituent of ribosome"/>
    <property type="evidence" value="ECO:0007669"/>
    <property type="project" value="InterPro"/>
</dbReference>
<dbReference type="GO" id="GO:0006412">
    <property type="term" value="P:translation"/>
    <property type="evidence" value="ECO:0007669"/>
    <property type="project" value="UniProtKB-UniRule"/>
</dbReference>
<dbReference type="CDD" id="cd00349">
    <property type="entry name" value="Ribosomal_L11"/>
    <property type="match status" value="1"/>
</dbReference>
<dbReference type="FunFam" id="1.10.10.250:FF:000001">
    <property type="entry name" value="50S ribosomal protein L11"/>
    <property type="match status" value="1"/>
</dbReference>
<dbReference type="FunFam" id="3.30.1550.10:FF:000001">
    <property type="entry name" value="50S ribosomal protein L11"/>
    <property type="match status" value="1"/>
</dbReference>
<dbReference type="Gene3D" id="1.10.10.250">
    <property type="entry name" value="Ribosomal protein L11, C-terminal domain"/>
    <property type="match status" value="1"/>
</dbReference>
<dbReference type="Gene3D" id="3.30.1550.10">
    <property type="entry name" value="Ribosomal protein L11/L12, N-terminal domain"/>
    <property type="match status" value="1"/>
</dbReference>
<dbReference type="HAMAP" id="MF_00736">
    <property type="entry name" value="Ribosomal_uL11"/>
    <property type="match status" value="1"/>
</dbReference>
<dbReference type="InterPro" id="IPR000911">
    <property type="entry name" value="Ribosomal_uL11"/>
</dbReference>
<dbReference type="InterPro" id="IPR006519">
    <property type="entry name" value="Ribosomal_uL11_bac-typ"/>
</dbReference>
<dbReference type="InterPro" id="IPR020783">
    <property type="entry name" value="Ribosomal_uL11_C"/>
</dbReference>
<dbReference type="InterPro" id="IPR036769">
    <property type="entry name" value="Ribosomal_uL11_C_sf"/>
</dbReference>
<dbReference type="InterPro" id="IPR020785">
    <property type="entry name" value="Ribosomal_uL11_CS"/>
</dbReference>
<dbReference type="InterPro" id="IPR020784">
    <property type="entry name" value="Ribosomal_uL11_N"/>
</dbReference>
<dbReference type="InterPro" id="IPR036796">
    <property type="entry name" value="Ribosomal_uL11_N_sf"/>
</dbReference>
<dbReference type="NCBIfam" id="TIGR01632">
    <property type="entry name" value="L11_bact"/>
    <property type="match status" value="1"/>
</dbReference>
<dbReference type="PANTHER" id="PTHR11661">
    <property type="entry name" value="60S RIBOSOMAL PROTEIN L12"/>
    <property type="match status" value="1"/>
</dbReference>
<dbReference type="PANTHER" id="PTHR11661:SF1">
    <property type="entry name" value="LARGE RIBOSOMAL SUBUNIT PROTEIN UL11M"/>
    <property type="match status" value="1"/>
</dbReference>
<dbReference type="Pfam" id="PF00298">
    <property type="entry name" value="Ribosomal_L11"/>
    <property type="match status" value="1"/>
</dbReference>
<dbReference type="Pfam" id="PF03946">
    <property type="entry name" value="Ribosomal_L11_N"/>
    <property type="match status" value="1"/>
</dbReference>
<dbReference type="SMART" id="SM00649">
    <property type="entry name" value="RL11"/>
    <property type="match status" value="1"/>
</dbReference>
<dbReference type="SUPFAM" id="SSF54747">
    <property type="entry name" value="Ribosomal L11/L12e N-terminal domain"/>
    <property type="match status" value="1"/>
</dbReference>
<dbReference type="SUPFAM" id="SSF46906">
    <property type="entry name" value="Ribosomal protein L11, C-terminal domain"/>
    <property type="match status" value="1"/>
</dbReference>
<dbReference type="PROSITE" id="PS00359">
    <property type="entry name" value="RIBOSOMAL_L11"/>
    <property type="match status" value="1"/>
</dbReference>
<proteinExistence type="inferred from homology"/>
<evidence type="ECO:0000255" key="1">
    <source>
        <dbReference type="HAMAP-Rule" id="MF_00736"/>
    </source>
</evidence>
<evidence type="ECO:0000305" key="2"/>
<organism>
    <name type="scientific">Bordetella parapertussis (strain 12822 / ATCC BAA-587 / NCTC 13253)</name>
    <dbReference type="NCBI Taxonomy" id="257311"/>
    <lineage>
        <taxon>Bacteria</taxon>
        <taxon>Pseudomonadati</taxon>
        <taxon>Pseudomonadota</taxon>
        <taxon>Betaproteobacteria</taxon>
        <taxon>Burkholderiales</taxon>
        <taxon>Alcaligenaceae</taxon>
        <taxon>Bordetella</taxon>
    </lineage>
</organism>
<reference key="1">
    <citation type="journal article" date="2003" name="Nat. Genet.">
        <title>Comparative analysis of the genome sequences of Bordetella pertussis, Bordetella parapertussis and Bordetella bronchiseptica.</title>
        <authorList>
            <person name="Parkhill J."/>
            <person name="Sebaihia M."/>
            <person name="Preston A."/>
            <person name="Murphy L.D."/>
            <person name="Thomson N.R."/>
            <person name="Harris D.E."/>
            <person name="Holden M.T.G."/>
            <person name="Churcher C.M."/>
            <person name="Bentley S.D."/>
            <person name="Mungall K.L."/>
            <person name="Cerdeno-Tarraga A.-M."/>
            <person name="Temple L."/>
            <person name="James K.D."/>
            <person name="Harris B."/>
            <person name="Quail M.A."/>
            <person name="Achtman M."/>
            <person name="Atkin R."/>
            <person name="Baker S."/>
            <person name="Basham D."/>
            <person name="Bason N."/>
            <person name="Cherevach I."/>
            <person name="Chillingworth T."/>
            <person name="Collins M."/>
            <person name="Cronin A."/>
            <person name="Davis P."/>
            <person name="Doggett J."/>
            <person name="Feltwell T."/>
            <person name="Goble A."/>
            <person name="Hamlin N."/>
            <person name="Hauser H."/>
            <person name="Holroyd S."/>
            <person name="Jagels K."/>
            <person name="Leather S."/>
            <person name="Moule S."/>
            <person name="Norberczak H."/>
            <person name="O'Neil S."/>
            <person name="Ormond D."/>
            <person name="Price C."/>
            <person name="Rabbinowitsch E."/>
            <person name="Rutter S."/>
            <person name="Sanders M."/>
            <person name="Saunders D."/>
            <person name="Seeger K."/>
            <person name="Sharp S."/>
            <person name="Simmonds M."/>
            <person name="Skelton J."/>
            <person name="Squares R."/>
            <person name="Squares S."/>
            <person name="Stevens K."/>
            <person name="Unwin L."/>
            <person name="Whitehead S."/>
            <person name="Barrell B.G."/>
            <person name="Maskell D.J."/>
        </authorList>
    </citation>
    <scope>NUCLEOTIDE SEQUENCE [LARGE SCALE GENOMIC DNA]</scope>
    <source>
        <strain>12822 / ATCC BAA-587 / NCTC 13253</strain>
    </source>
</reference>
<comment type="function">
    <text evidence="1">Forms part of the ribosomal stalk which helps the ribosome interact with GTP-bound translation factors.</text>
</comment>
<comment type="subunit">
    <text evidence="1">Part of the ribosomal stalk of the 50S ribosomal subunit. Interacts with L10 and the large rRNA to form the base of the stalk. L10 forms an elongated spine to which L12 dimers bind in a sequential fashion forming a multimeric L10(L12)X complex.</text>
</comment>
<comment type="PTM">
    <text evidence="1">One or more lysine residues are methylated.</text>
</comment>
<comment type="similarity">
    <text evidence="1">Belongs to the universal ribosomal protein uL11 family.</text>
</comment>
<name>RL11_BORPA</name>
<accession>Q7W2H3</accession>
<protein>
    <recommendedName>
        <fullName evidence="1">Large ribosomal subunit protein uL11</fullName>
    </recommendedName>
    <alternativeName>
        <fullName evidence="2">50S ribosomal protein L11</fullName>
    </alternativeName>
</protein>